<evidence type="ECO:0000255" key="1">
    <source>
        <dbReference type="HAMAP-Rule" id="MF_00446"/>
    </source>
</evidence>
<comment type="function">
    <text evidence="1">Catalyzes the pyruvoyl-dependent decarboxylation of aspartate to produce beta-alanine.</text>
</comment>
<comment type="catalytic activity">
    <reaction evidence="1">
        <text>L-aspartate + H(+) = beta-alanine + CO2</text>
        <dbReference type="Rhea" id="RHEA:19497"/>
        <dbReference type="ChEBI" id="CHEBI:15378"/>
        <dbReference type="ChEBI" id="CHEBI:16526"/>
        <dbReference type="ChEBI" id="CHEBI:29991"/>
        <dbReference type="ChEBI" id="CHEBI:57966"/>
        <dbReference type="EC" id="4.1.1.11"/>
    </reaction>
</comment>
<comment type="cofactor">
    <cofactor evidence="1">
        <name>pyruvate</name>
        <dbReference type="ChEBI" id="CHEBI:15361"/>
    </cofactor>
    <text evidence="1">Binds 1 pyruvoyl group covalently per subunit.</text>
</comment>
<comment type="pathway">
    <text evidence="1">Cofactor biosynthesis; (R)-pantothenate biosynthesis; beta-alanine from L-aspartate: step 1/1.</text>
</comment>
<comment type="subunit">
    <text evidence="1">Heterooctamer of four alpha and four beta subunits.</text>
</comment>
<comment type="subcellular location">
    <subcellularLocation>
        <location evidence="1">Cytoplasm</location>
    </subcellularLocation>
</comment>
<comment type="PTM">
    <text evidence="1">Is synthesized initially as an inactive proenzyme, which is activated by self-cleavage at a specific serine bond to produce a beta-subunit with a hydroxyl group at its C-terminus and an alpha-subunit with a pyruvoyl group at its N-terminus.</text>
</comment>
<comment type="similarity">
    <text evidence="1">Belongs to the PanD family.</text>
</comment>
<dbReference type="EC" id="4.1.1.11" evidence="1"/>
<dbReference type="EMBL" id="CU468230">
    <property type="protein sequence ID" value="CAP01936.1"/>
    <property type="molecule type" value="Genomic_DNA"/>
</dbReference>
<dbReference type="SMR" id="B0VTX3"/>
<dbReference type="KEGG" id="abm:ABSDF2630"/>
<dbReference type="HOGENOM" id="CLU_115305_2_1_6"/>
<dbReference type="UniPathway" id="UPA00028">
    <property type="reaction ID" value="UER00002"/>
</dbReference>
<dbReference type="Proteomes" id="UP000001741">
    <property type="component" value="Chromosome"/>
</dbReference>
<dbReference type="GO" id="GO:0005829">
    <property type="term" value="C:cytosol"/>
    <property type="evidence" value="ECO:0007669"/>
    <property type="project" value="TreeGrafter"/>
</dbReference>
<dbReference type="GO" id="GO:0004068">
    <property type="term" value="F:aspartate 1-decarboxylase activity"/>
    <property type="evidence" value="ECO:0007669"/>
    <property type="project" value="UniProtKB-UniRule"/>
</dbReference>
<dbReference type="GO" id="GO:0006523">
    <property type="term" value="P:alanine biosynthetic process"/>
    <property type="evidence" value="ECO:0007669"/>
    <property type="project" value="InterPro"/>
</dbReference>
<dbReference type="GO" id="GO:0015940">
    <property type="term" value="P:pantothenate biosynthetic process"/>
    <property type="evidence" value="ECO:0007669"/>
    <property type="project" value="UniProtKB-UniRule"/>
</dbReference>
<dbReference type="CDD" id="cd06919">
    <property type="entry name" value="Asp_decarbox"/>
    <property type="match status" value="1"/>
</dbReference>
<dbReference type="Gene3D" id="2.40.40.20">
    <property type="match status" value="1"/>
</dbReference>
<dbReference type="HAMAP" id="MF_00446">
    <property type="entry name" value="PanD"/>
    <property type="match status" value="1"/>
</dbReference>
<dbReference type="InterPro" id="IPR009010">
    <property type="entry name" value="Asp_de-COase-like_dom_sf"/>
</dbReference>
<dbReference type="InterPro" id="IPR003190">
    <property type="entry name" value="Asp_decarbox"/>
</dbReference>
<dbReference type="NCBIfam" id="TIGR00223">
    <property type="entry name" value="panD"/>
    <property type="match status" value="1"/>
</dbReference>
<dbReference type="PANTHER" id="PTHR21012">
    <property type="entry name" value="ASPARTATE 1-DECARBOXYLASE"/>
    <property type="match status" value="1"/>
</dbReference>
<dbReference type="PANTHER" id="PTHR21012:SF0">
    <property type="entry name" value="ASPARTATE 1-DECARBOXYLASE"/>
    <property type="match status" value="1"/>
</dbReference>
<dbReference type="Pfam" id="PF02261">
    <property type="entry name" value="Asp_decarbox"/>
    <property type="match status" value="1"/>
</dbReference>
<dbReference type="PIRSF" id="PIRSF006246">
    <property type="entry name" value="Asp_decarbox"/>
    <property type="match status" value="1"/>
</dbReference>
<dbReference type="SUPFAM" id="SSF50692">
    <property type="entry name" value="ADC-like"/>
    <property type="match status" value="1"/>
</dbReference>
<proteinExistence type="inferred from homology"/>
<gene>
    <name evidence="1" type="primary">panD</name>
    <name type="ordered locus">ABSDF2630</name>
</gene>
<name>PAND_ACIBS</name>
<reference key="1">
    <citation type="journal article" date="2008" name="PLoS ONE">
        <title>Comparative analysis of Acinetobacters: three genomes for three lifestyles.</title>
        <authorList>
            <person name="Vallenet D."/>
            <person name="Nordmann P."/>
            <person name="Barbe V."/>
            <person name="Poirel L."/>
            <person name="Mangenot S."/>
            <person name="Bataille E."/>
            <person name="Dossat C."/>
            <person name="Gas S."/>
            <person name="Kreimeyer A."/>
            <person name="Lenoble P."/>
            <person name="Oztas S."/>
            <person name="Poulain J."/>
            <person name="Segurens B."/>
            <person name="Robert C."/>
            <person name="Abergel C."/>
            <person name="Claverie J.-M."/>
            <person name="Raoult D."/>
            <person name="Medigue C."/>
            <person name="Weissenbach J."/>
            <person name="Cruveiller S."/>
        </authorList>
    </citation>
    <scope>NUCLEOTIDE SEQUENCE [LARGE SCALE GENOMIC DNA]</scope>
    <source>
        <strain>SDF</strain>
    </source>
</reference>
<accession>B0VTX3</accession>
<sequence length="126" mass="13713">MLSRLLKCKIHRAVVTHAELHYEGSCAIDGVLMDLAGIREYEEIHVWNVTNGKRFTTYAIRGEDNSGIISVNGGAAHQADVGDLVIIATFGDFTEAEANAHKPRLVYANPDNTVNHTANCIPVQVA</sequence>
<organism>
    <name type="scientific">Acinetobacter baumannii (strain SDF)</name>
    <dbReference type="NCBI Taxonomy" id="509170"/>
    <lineage>
        <taxon>Bacteria</taxon>
        <taxon>Pseudomonadati</taxon>
        <taxon>Pseudomonadota</taxon>
        <taxon>Gammaproteobacteria</taxon>
        <taxon>Moraxellales</taxon>
        <taxon>Moraxellaceae</taxon>
        <taxon>Acinetobacter</taxon>
        <taxon>Acinetobacter calcoaceticus/baumannii complex</taxon>
    </lineage>
</organism>
<protein>
    <recommendedName>
        <fullName evidence="1">Aspartate 1-decarboxylase</fullName>
        <ecNumber evidence="1">4.1.1.11</ecNumber>
    </recommendedName>
    <alternativeName>
        <fullName evidence="1">Aspartate alpha-decarboxylase</fullName>
    </alternativeName>
    <component>
        <recommendedName>
            <fullName evidence="1">Aspartate 1-decarboxylase beta chain</fullName>
        </recommendedName>
    </component>
    <component>
        <recommendedName>
            <fullName evidence="1">Aspartate 1-decarboxylase alpha chain</fullName>
        </recommendedName>
    </component>
</protein>
<keyword id="KW-0068">Autocatalytic cleavage</keyword>
<keyword id="KW-0963">Cytoplasm</keyword>
<keyword id="KW-0210">Decarboxylase</keyword>
<keyword id="KW-0456">Lyase</keyword>
<keyword id="KW-0566">Pantothenate biosynthesis</keyword>
<keyword id="KW-0670">Pyruvate</keyword>
<keyword id="KW-0704">Schiff base</keyword>
<keyword id="KW-0865">Zymogen</keyword>
<feature type="chain" id="PRO_1000124739" description="Aspartate 1-decarboxylase beta chain" evidence="1">
    <location>
        <begin position="1"/>
        <end position="24"/>
    </location>
</feature>
<feature type="chain" id="PRO_1000124740" description="Aspartate 1-decarboxylase alpha chain" evidence="1">
    <location>
        <begin position="25"/>
        <end position="126"/>
    </location>
</feature>
<feature type="active site" description="Schiff-base intermediate with substrate; via pyruvic acid" evidence="1">
    <location>
        <position position="25"/>
    </location>
</feature>
<feature type="active site" description="Proton donor" evidence="1">
    <location>
        <position position="58"/>
    </location>
</feature>
<feature type="binding site" evidence="1">
    <location>
        <position position="57"/>
    </location>
    <ligand>
        <name>substrate</name>
    </ligand>
</feature>
<feature type="binding site" evidence="1">
    <location>
        <begin position="73"/>
        <end position="75"/>
    </location>
    <ligand>
        <name>substrate</name>
    </ligand>
</feature>
<feature type="modified residue" description="Pyruvic acid (Ser)" evidence="1">
    <location>
        <position position="25"/>
    </location>
</feature>